<accession>A0A0B7P221</accession>
<feature type="chain" id="PRO_0000434005" description="Uncharacterized protein RDT1">
    <location>
        <begin position="1"/>
        <end position="28"/>
    </location>
</feature>
<evidence type="ECO:0000303" key="1">
    <source>
    </source>
</evidence>
<evidence type="ECO:0000305" key="2">
    <source>
    </source>
</evidence>
<evidence type="ECO:0000312" key="3">
    <source>
        <dbReference type="SGD" id="S000178054"/>
    </source>
</evidence>
<sequence>MIRQKIFVFIVKSRRNSICPAIRRKEDY</sequence>
<organism>
    <name type="scientific">Saccharomyces cerevisiae (strain ATCC 204508 / S288c)</name>
    <name type="common">Baker's yeast</name>
    <dbReference type="NCBI Taxonomy" id="559292"/>
    <lineage>
        <taxon>Eukaryota</taxon>
        <taxon>Fungi</taxon>
        <taxon>Dikarya</taxon>
        <taxon>Ascomycota</taxon>
        <taxon>Saccharomycotina</taxon>
        <taxon>Saccharomycetes</taxon>
        <taxon>Saccharomycetales</taxon>
        <taxon>Saccharomycetaceae</taxon>
        <taxon>Saccharomyces</taxon>
    </lineage>
</organism>
<dbReference type="EMBL" id="BK006937">
    <property type="protein sequence ID" value="DAA64696.1"/>
    <property type="molecule type" value="Genomic_DNA"/>
</dbReference>
<dbReference type="RefSeq" id="NP_001291943.1">
    <property type="nucleotide sequence ID" value="NM_001305014.1"/>
</dbReference>
<dbReference type="FunCoup" id="A0A0B7P221">
    <property type="interactions" value="7"/>
</dbReference>
<dbReference type="STRING" id="4932.YCL054W-A"/>
<dbReference type="EnsemblFungi" id="YCL054W-A_mRNA">
    <property type="protein sequence ID" value="YCL054W-A"/>
    <property type="gene ID" value="YCL054W-A"/>
</dbReference>
<dbReference type="GeneID" id="23547378"/>
<dbReference type="KEGG" id="sce:YCL054W-A"/>
<dbReference type="AGR" id="SGD:S000178054"/>
<dbReference type="SGD" id="S000178054">
    <property type="gene designation" value="RDT1"/>
</dbReference>
<dbReference type="VEuPathDB" id="FungiDB:YCL054W-A"/>
<dbReference type="InParanoid" id="A0A0B7P221"/>
<dbReference type="PRO" id="PR:A0A0B7P221"/>
<dbReference type="Proteomes" id="UP000002311">
    <property type="component" value="Chromosome III"/>
</dbReference>
<protein>
    <recommendedName>
        <fullName evidence="1">Uncharacterized protein RDT1</fullName>
    </recommendedName>
    <alternativeName>
        <fullName evidence="1">Ribosomally detected transcript 1</fullName>
    </alternativeName>
</protein>
<comment type="miscellaneous">
    <text evidence="2">Shows evidence of translation. May be a new protein-coding gene that originated de novo from non-coding sequences, e.g. transcripts of unknown function that escape exonucleolytic degradation (stable unannotated transcripts or SUTs) and associate with ribosomes.</text>
</comment>
<name>RDT1_YEAST</name>
<reference key="1">
    <citation type="journal article" date="1992" name="Nature">
        <title>The complete DNA sequence of yeast chromosome III.</title>
        <authorList>
            <person name="Oliver S.G."/>
            <person name="van der Aart Q.J.M."/>
            <person name="Agostoni-Carbone M.L."/>
            <person name="Aigle M."/>
            <person name="Alberghina L."/>
            <person name="Alexandraki D."/>
            <person name="Antoine G."/>
            <person name="Anwar R."/>
            <person name="Ballesta J.P.G."/>
            <person name="Benit P."/>
            <person name="Berben G."/>
            <person name="Bergantino E."/>
            <person name="Biteau N."/>
            <person name="Bolle P.-A."/>
            <person name="Bolotin-Fukuhara M."/>
            <person name="Brown A."/>
            <person name="Brown A.J.P."/>
            <person name="Buhler J.-M."/>
            <person name="Carcano C."/>
            <person name="Carignani G."/>
            <person name="Cederberg H."/>
            <person name="Chanet R."/>
            <person name="Contreras R."/>
            <person name="Crouzet M."/>
            <person name="Daignan-Fornier B."/>
            <person name="Defoor E."/>
            <person name="Delgado M.D."/>
            <person name="Demolder J."/>
            <person name="Doira C."/>
            <person name="Dubois E."/>
            <person name="Dujon B."/>
            <person name="Duesterhoeft A."/>
            <person name="Erdmann D."/>
            <person name="Esteban M."/>
            <person name="Fabre F."/>
            <person name="Fairhead C."/>
            <person name="Faye G."/>
            <person name="Feldmann H."/>
            <person name="Fiers W."/>
            <person name="Francingues-Gaillard M.-C."/>
            <person name="Franco L."/>
            <person name="Frontali L."/>
            <person name="Fukuhara H."/>
            <person name="Fuller L.J."/>
            <person name="Galland P."/>
            <person name="Gent M.E."/>
            <person name="Gigot D."/>
            <person name="Gilliquet V."/>
            <person name="Glansdorff N."/>
            <person name="Goffeau A."/>
            <person name="Grenson M."/>
            <person name="Grisanti P."/>
            <person name="Grivell L.A."/>
            <person name="de Haan M."/>
            <person name="Haasemann M."/>
            <person name="Hatat D."/>
            <person name="Hoenicka J."/>
            <person name="Hegemann J.H."/>
            <person name="Herbert C.J."/>
            <person name="Hilger F."/>
            <person name="Hohmann S."/>
            <person name="Hollenberg C.P."/>
            <person name="Huse K."/>
            <person name="Iborra F."/>
            <person name="Indge K.J."/>
            <person name="Isono K."/>
            <person name="Jacq C."/>
            <person name="Jacquet M."/>
            <person name="James C.M."/>
            <person name="Jauniaux J.-C."/>
            <person name="Jia Y."/>
            <person name="Jimenez A."/>
            <person name="Kelly A."/>
            <person name="Kleinhans U."/>
            <person name="Kreisl P."/>
            <person name="Lanfranchi G."/>
            <person name="Lewis C."/>
            <person name="van der Linden C.G."/>
            <person name="Lucchini G."/>
            <person name="Lutzenkirchen K."/>
            <person name="Maat M.J."/>
            <person name="Mallet L."/>
            <person name="Mannhaupt G."/>
            <person name="Martegani E."/>
            <person name="Mathieu A."/>
            <person name="Maurer C.T.C."/>
            <person name="McConnell D."/>
            <person name="McKee R.A."/>
            <person name="Messenguy F."/>
            <person name="Mewes H.-W."/>
            <person name="Molemans F."/>
            <person name="Montague M.A."/>
            <person name="Muzi Falconi M."/>
            <person name="Navas L."/>
            <person name="Newlon C.S."/>
            <person name="Noone D."/>
            <person name="Pallier C."/>
            <person name="Panzeri L."/>
            <person name="Pearson B.M."/>
            <person name="Perea J."/>
            <person name="Philippsen P."/>
            <person name="Pierard A."/>
            <person name="Planta R.J."/>
            <person name="Plevani P."/>
            <person name="Poetsch B."/>
            <person name="Pohl F.M."/>
            <person name="Purnelle B."/>
            <person name="Ramezani Rad M."/>
            <person name="Rasmussen S.W."/>
            <person name="Raynal A."/>
            <person name="Remacha M.A."/>
            <person name="Richterich P."/>
            <person name="Roberts A.B."/>
            <person name="Rodriguez F."/>
            <person name="Sanz E."/>
            <person name="Schaaff-Gerstenschlaeger I."/>
            <person name="Scherens B."/>
            <person name="Schweitzer B."/>
            <person name="Shu Y."/>
            <person name="Skala J."/>
            <person name="Slonimski P.P."/>
            <person name="Sor F."/>
            <person name="Soustelle C."/>
            <person name="Spiegelberg R."/>
            <person name="Stateva L.I."/>
            <person name="Steensma H.Y."/>
            <person name="Steiner S."/>
            <person name="Thierry A."/>
            <person name="Thireos G."/>
            <person name="Tzermia M."/>
            <person name="Urrestarazu L.A."/>
            <person name="Valle G."/>
            <person name="Vetter I."/>
            <person name="van Vliet-Reedijk J.C."/>
            <person name="Voet M."/>
            <person name="Volckaert G."/>
            <person name="Vreken P."/>
            <person name="Wang H."/>
            <person name="Warmington J.R."/>
            <person name="von Wettstein D."/>
            <person name="Wicksteed B.L."/>
            <person name="Wilson C."/>
            <person name="Wurst H."/>
            <person name="Xu G."/>
            <person name="Yoshikawa A."/>
            <person name="Zimmermann F.K."/>
            <person name="Sgouros J.G."/>
        </authorList>
    </citation>
    <scope>NUCLEOTIDE SEQUENCE [LARGE SCALE GENOMIC DNA]</scope>
    <source>
        <strain>ATCC 204508 / S288c</strain>
    </source>
</reference>
<reference key="2">
    <citation type="journal article" date="2014" name="G3 (Bethesda)">
        <title>The reference genome sequence of Saccharomyces cerevisiae: Then and now.</title>
        <authorList>
            <person name="Engel S.R."/>
            <person name="Dietrich F.S."/>
            <person name="Fisk D.G."/>
            <person name="Binkley G."/>
            <person name="Balakrishnan R."/>
            <person name="Costanzo M.C."/>
            <person name="Dwight S.S."/>
            <person name="Hitz B.C."/>
            <person name="Karra K."/>
            <person name="Nash R.S."/>
            <person name="Weng S."/>
            <person name="Wong E.D."/>
            <person name="Lloyd P."/>
            <person name="Skrzypek M.S."/>
            <person name="Miyasato S.R."/>
            <person name="Simison M."/>
            <person name="Cherry J.M."/>
        </authorList>
    </citation>
    <scope>GENOME REANNOTATION</scope>
    <source>
        <strain>ATCC 204508 / S288c</strain>
    </source>
</reference>
<reference key="3">
    <citation type="journal article" date="2011" name="Genome Biol. Evol.">
        <title>Putatively noncoding transcripts show extensive association with ribosomes.</title>
        <authorList>
            <person name="Wilson B.A."/>
            <person name="Masel J."/>
        </authorList>
    </citation>
    <scope>IDENTIFICATION</scope>
</reference>
<proteinExistence type="predicted"/>
<gene>
    <name evidence="1" type="primary">RDT1</name>
    <name evidence="3" type="ordered locus">YCL054W-A</name>
</gene>
<keyword id="KW-1185">Reference proteome</keyword>